<evidence type="ECO:0000255" key="1">
    <source>
        <dbReference type="HAMAP-Rule" id="MF_00107"/>
    </source>
</evidence>
<accession>B5RDQ2</accession>
<organism>
    <name type="scientific">Salmonella gallinarum (strain 287/91 / NCTC 13346)</name>
    <dbReference type="NCBI Taxonomy" id="550538"/>
    <lineage>
        <taxon>Bacteria</taxon>
        <taxon>Pseudomonadati</taxon>
        <taxon>Pseudomonadota</taxon>
        <taxon>Gammaproteobacteria</taxon>
        <taxon>Enterobacterales</taxon>
        <taxon>Enterobacteriaceae</taxon>
        <taxon>Salmonella</taxon>
    </lineage>
</organism>
<sequence length="159" mass="16876">MRIGHGFDVHAFGGEGPIIIGGVRISYEKGLLAHSDGDVALHALTDALLGAAALGDIGKLFPDTDPAFKGADSRELLREAWRRIQAKGYTLGNVDVTIIAQAPKMLPHIPQMRVFIAEDLGCHMDDVNVKATTTEKLGFTGRGEGIACEAVALLMKAAK</sequence>
<reference key="1">
    <citation type="journal article" date="2008" name="Genome Res.">
        <title>Comparative genome analysis of Salmonella enteritidis PT4 and Salmonella gallinarum 287/91 provides insights into evolutionary and host adaptation pathways.</title>
        <authorList>
            <person name="Thomson N.R."/>
            <person name="Clayton D.J."/>
            <person name="Windhorst D."/>
            <person name="Vernikos G."/>
            <person name="Davidson S."/>
            <person name="Churcher C."/>
            <person name="Quail M.A."/>
            <person name="Stevens M."/>
            <person name="Jones M.A."/>
            <person name="Watson M."/>
            <person name="Barron A."/>
            <person name="Layton A."/>
            <person name="Pickard D."/>
            <person name="Kingsley R.A."/>
            <person name="Bignell A."/>
            <person name="Clark L."/>
            <person name="Harris B."/>
            <person name="Ormond D."/>
            <person name="Abdellah Z."/>
            <person name="Brooks K."/>
            <person name="Cherevach I."/>
            <person name="Chillingworth T."/>
            <person name="Woodward J."/>
            <person name="Norberczak H."/>
            <person name="Lord A."/>
            <person name="Arrowsmith C."/>
            <person name="Jagels K."/>
            <person name="Moule S."/>
            <person name="Mungall K."/>
            <person name="Saunders M."/>
            <person name="Whitehead S."/>
            <person name="Chabalgoity J.A."/>
            <person name="Maskell D."/>
            <person name="Humphreys T."/>
            <person name="Roberts M."/>
            <person name="Barrow P.A."/>
            <person name="Dougan G."/>
            <person name="Parkhill J."/>
        </authorList>
    </citation>
    <scope>NUCLEOTIDE SEQUENCE [LARGE SCALE GENOMIC DNA]</scope>
    <source>
        <strain>287/91 / NCTC 13346</strain>
    </source>
</reference>
<keyword id="KW-0414">Isoprene biosynthesis</keyword>
<keyword id="KW-0456">Lyase</keyword>
<keyword id="KW-0479">Metal-binding</keyword>
<dbReference type="EC" id="4.6.1.12" evidence="1"/>
<dbReference type="EMBL" id="AM933173">
    <property type="protein sequence ID" value="CAR38640.1"/>
    <property type="molecule type" value="Genomic_DNA"/>
</dbReference>
<dbReference type="RefSeq" id="WP_001219253.1">
    <property type="nucleotide sequence ID" value="NC_011274.1"/>
</dbReference>
<dbReference type="SMR" id="B5RDQ2"/>
<dbReference type="KEGG" id="seg:SG2832"/>
<dbReference type="HOGENOM" id="CLU_084630_2_0_6"/>
<dbReference type="UniPathway" id="UPA00056">
    <property type="reaction ID" value="UER00095"/>
</dbReference>
<dbReference type="Proteomes" id="UP000008321">
    <property type="component" value="Chromosome"/>
</dbReference>
<dbReference type="GO" id="GO:0008685">
    <property type="term" value="F:2-C-methyl-D-erythritol 2,4-cyclodiphosphate synthase activity"/>
    <property type="evidence" value="ECO:0007669"/>
    <property type="project" value="UniProtKB-UniRule"/>
</dbReference>
<dbReference type="GO" id="GO:0046872">
    <property type="term" value="F:metal ion binding"/>
    <property type="evidence" value="ECO:0007669"/>
    <property type="project" value="UniProtKB-KW"/>
</dbReference>
<dbReference type="GO" id="GO:0019288">
    <property type="term" value="P:isopentenyl diphosphate biosynthetic process, methylerythritol 4-phosphate pathway"/>
    <property type="evidence" value="ECO:0007669"/>
    <property type="project" value="UniProtKB-UniRule"/>
</dbReference>
<dbReference type="GO" id="GO:0016114">
    <property type="term" value="P:terpenoid biosynthetic process"/>
    <property type="evidence" value="ECO:0007669"/>
    <property type="project" value="InterPro"/>
</dbReference>
<dbReference type="CDD" id="cd00554">
    <property type="entry name" value="MECDP_synthase"/>
    <property type="match status" value="1"/>
</dbReference>
<dbReference type="FunFam" id="3.30.1330.50:FF:000001">
    <property type="entry name" value="2-C-methyl-D-erythritol 2,4-cyclodiphosphate synthase"/>
    <property type="match status" value="1"/>
</dbReference>
<dbReference type="Gene3D" id="3.30.1330.50">
    <property type="entry name" value="2-C-methyl-D-erythritol 2,4-cyclodiphosphate synthase"/>
    <property type="match status" value="1"/>
</dbReference>
<dbReference type="HAMAP" id="MF_00107">
    <property type="entry name" value="IspF"/>
    <property type="match status" value="1"/>
</dbReference>
<dbReference type="InterPro" id="IPR003526">
    <property type="entry name" value="MECDP_synthase"/>
</dbReference>
<dbReference type="InterPro" id="IPR020555">
    <property type="entry name" value="MECDP_synthase_CS"/>
</dbReference>
<dbReference type="InterPro" id="IPR036571">
    <property type="entry name" value="MECDP_synthase_sf"/>
</dbReference>
<dbReference type="NCBIfam" id="TIGR00151">
    <property type="entry name" value="ispF"/>
    <property type="match status" value="1"/>
</dbReference>
<dbReference type="PANTHER" id="PTHR43181">
    <property type="entry name" value="2-C-METHYL-D-ERYTHRITOL 2,4-CYCLODIPHOSPHATE SYNTHASE, CHLOROPLASTIC"/>
    <property type="match status" value="1"/>
</dbReference>
<dbReference type="PANTHER" id="PTHR43181:SF1">
    <property type="entry name" value="2-C-METHYL-D-ERYTHRITOL 2,4-CYCLODIPHOSPHATE SYNTHASE, CHLOROPLASTIC"/>
    <property type="match status" value="1"/>
</dbReference>
<dbReference type="Pfam" id="PF02542">
    <property type="entry name" value="YgbB"/>
    <property type="match status" value="1"/>
</dbReference>
<dbReference type="SUPFAM" id="SSF69765">
    <property type="entry name" value="IpsF-like"/>
    <property type="match status" value="1"/>
</dbReference>
<dbReference type="PROSITE" id="PS01350">
    <property type="entry name" value="ISPF"/>
    <property type="match status" value="1"/>
</dbReference>
<name>ISPF_SALG2</name>
<proteinExistence type="inferred from homology"/>
<comment type="function">
    <text evidence="1">Involved in the biosynthesis of isopentenyl diphosphate (IPP) and dimethylallyl diphosphate (DMAPP), two major building blocks of isoprenoid compounds. Catalyzes the conversion of 4-diphosphocytidyl-2-C-methyl-D-erythritol 2-phosphate (CDP-ME2P) to 2-C-methyl-D-erythritol 2,4-cyclodiphosphate (ME-CPP) with a corresponding release of cytidine 5-monophosphate (CMP).</text>
</comment>
<comment type="catalytic activity">
    <reaction evidence="1">
        <text>4-CDP-2-C-methyl-D-erythritol 2-phosphate = 2-C-methyl-D-erythritol 2,4-cyclic diphosphate + CMP</text>
        <dbReference type="Rhea" id="RHEA:23864"/>
        <dbReference type="ChEBI" id="CHEBI:57919"/>
        <dbReference type="ChEBI" id="CHEBI:58483"/>
        <dbReference type="ChEBI" id="CHEBI:60377"/>
        <dbReference type="EC" id="4.6.1.12"/>
    </reaction>
</comment>
<comment type="cofactor">
    <cofactor evidence="1">
        <name>a divalent metal cation</name>
        <dbReference type="ChEBI" id="CHEBI:60240"/>
    </cofactor>
    <text evidence="1">Binds 1 divalent metal cation per subunit.</text>
</comment>
<comment type="pathway">
    <text evidence="1">Isoprenoid biosynthesis; isopentenyl diphosphate biosynthesis via DXP pathway; isopentenyl diphosphate from 1-deoxy-D-xylulose 5-phosphate: step 4/6.</text>
</comment>
<comment type="subunit">
    <text evidence="1">Homotrimer.</text>
</comment>
<comment type="similarity">
    <text evidence="1">Belongs to the IspF family.</text>
</comment>
<protein>
    <recommendedName>
        <fullName evidence="1">2-C-methyl-D-erythritol 2,4-cyclodiphosphate synthase</fullName>
        <shortName evidence="1">MECDP-synthase</shortName>
        <shortName evidence="1">MECPP-synthase</shortName>
        <shortName evidence="1">MECPS</shortName>
        <ecNumber evidence="1">4.6.1.12</ecNumber>
    </recommendedName>
</protein>
<feature type="chain" id="PRO_1000094286" description="2-C-methyl-D-erythritol 2,4-cyclodiphosphate synthase">
    <location>
        <begin position="1"/>
        <end position="159"/>
    </location>
</feature>
<feature type="binding site" evidence="1">
    <location>
        <begin position="8"/>
        <end position="10"/>
    </location>
    <ligand>
        <name>4-CDP-2-C-methyl-D-erythritol 2-phosphate</name>
        <dbReference type="ChEBI" id="CHEBI:57919"/>
    </ligand>
</feature>
<feature type="binding site" evidence="1">
    <location>
        <position position="8"/>
    </location>
    <ligand>
        <name>a divalent metal cation</name>
        <dbReference type="ChEBI" id="CHEBI:60240"/>
    </ligand>
</feature>
<feature type="binding site" evidence="1">
    <location>
        <position position="10"/>
    </location>
    <ligand>
        <name>a divalent metal cation</name>
        <dbReference type="ChEBI" id="CHEBI:60240"/>
    </ligand>
</feature>
<feature type="binding site" evidence="1">
    <location>
        <begin position="34"/>
        <end position="35"/>
    </location>
    <ligand>
        <name>4-CDP-2-C-methyl-D-erythritol 2-phosphate</name>
        <dbReference type="ChEBI" id="CHEBI:57919"/>
    </ligand>
</feature>
<feature type="binding site" evidence="1">
    <location>
        <position position="42"/>
    </location>
    <ligand>
        <name>a divalent metal cation</name>
        <dbReference type="ChEBI" id="CHEBI:60240"/>
    </ligand>
</feature>
<feature type="binding site" evidence="1">
    <location>
        <begin position="56"/>
        <end position="58"/>
    </location>
    <ligand>
        <name>4-CDP-2-C-methyl-D-erythritol 2-phosphate</name>
        <dbReference type="ChEBI" id="CHEBI:57919"/>
    </ligand>
</feature>
<feature type="binding site" evidence="1">
    <location>
        <begin position="61"/>
        <end position="65"/>
    </location>
    <ligand>
        <name>4-CDP-2-C-methyl-D-erythritol 2-phosphate</name>
        <dbReference type="ChEBI" id="CHEBI:57919"/>
    </ligand>
</feature>
<feature type="binding site" evidence="1">
    <location>
        <begin position="100"/>
        <end position="106"/>
    </location>
    <ligand>
        <name>4-CDP-2-C-methyl-D-erythritol 2-phosphate</name>
        <dbReference type="ChEBI" id="CHEBI:57919"/>
    </ligand>
</feature>
<feature type="binding site" evidence="1">
    <location>
        <begin position="132"/>
        <end position="135"/>
    </location>
    <ligand>
        <name>4-CDP-2-C-methyl-D-erythritol 2-phosphate</name>
        <dbReference type="ChEBI" id="CHEBI:57919"/>
    </ligand>
</feature>
<feature type="binding site" evidence="1">
    <location>
        <position position="139"/>
    </location>
    <ligand>
        <name>4-CDP-2-C-methyl-D-erythritol 2-phosphate</name>
        <dbReference type="ChEBI" id="CHEBI:57919"/>
    </ligand>
</feature>
<feature type="binding site" evidence="1">
    <location>
        <position position="142"/>
    </location>
    <ligand>
        <name>4-CDP-2-C-methyl-D-erythritol 2-phosphate</name>
        <dbReference type="ChEBI" id="CHEBI:57919"/>
    </ligand>
</feature>
<feature type="site" description="Transition state stabilizer" evidence="1">
    <location>
        <position position="34"/>
    </location>
</feature>
<feature type="site" description="Transition state stabilizer" evidence="1">
    <location>
        <position position="133"/>
    </location>
</feature>
<gene>
    <name evidence="1" type="primary">ispF</name>
    <name type="ordered locus">SG2832</name>
</gene>